<accession>Q8YUS1</accession>
<proteinExistence type="inferred from homology"/>
<reference key="1">
    <citation type="journal article" date="2001" name="DNA Res.">
        <title>Complete genomic sequence of the filamentous nitrogen-fixing cyanobacterium Anabaena sp. strain PCC 7120.</title>
        <authorList>
            <person name="Kaneko T."/>
            <person name="Nakamura Y."/>
            <person name="Wolk C.P."/>
            <person name="Kuritz T."/>
            <person name="Sasamoto S."/>
            <person name="Watanabe A."/>
            <person name="Iriguchi M."/>
            <person name="Ishikawa A."/>
            <person name="Kawashima K."/>
            <person name="Kimura T."/>
            <person name="Kishida Y."/>
            <person name="Kohara M."/>
            <person name="Matsumoto M."/>
            <person name="Matsuno A."/>
            <person name="Muraki A."/>
            <person name="Nakazaki N."/>
            <person name="Shimpo S."/>
            <person name="Sugimoto M."/>
            <person name="Takazawa M."/>
            <person name="Yamada M."/>
            <person name="Yasuda M."/>
            <person name="Tabata S."/>
        </authorList>
    </citation>
    <scope>NUCLEOTIDE SEQUENCE [LARGE SCALE GENOMIC DNA]</scope>
    <source>
        <strain>PCC 7120 / SAG 25.82 / UTEX 2576</strain>
    </source>
</reference>
<dbReference type="EC" id="3.4.24.-" evidence="1"/>
<dbReference type="EMBL" id="BA000019">
    <property type="protein sequence ID" value="BAB73962.1"/>
    <property type="molecule type" value="Genomic_DNA"/>
</dbReference>
<dbReference type="PIR" id="AH2088">
    <property type="entry name" value="AH2088"/>
</dbReference>
<dbReference type="RefSeq" id="WP_010996420.1">
    <property type="nucleotide sequence ID" value="NZ_RSCN01000004.1"/>
</dbReference>
<dbReference type="SMR" id="Q8YUS1"/>
<dbReference type="STRING" id="103690.gene:10494292"/>
<dbReference type="KEGG" id="ana:all2263"/>
<dbReference type="eggNOG" id="COG0501">
    <property type="taxonomic scope" value="Bacteria"/>
</dbReference>
<dbReference type="OrthoDB" id="15218at2"/>
<dbReference type="Proteomes" id="UP000002483">
    <property type="component" value="Chromosome"/>
</dbReference>
<dbReference type="GO" id="GO:0005886">
    <property type="term" value="C:plasma membrane"/>
    <property type="evidence" value="ECO:0007669"/>
    <property type="project" value="UniProtKB-SubCell"/>
</dbReference>
<dbReference type="GO" id="GO:0004222">
    <property type="term" value="F:metalloendopeptidase activity"/>
    <property type="evidence" value="ECO:0007669"/>
    <property type="project" value="UniProtKB-UniRule"/>
</dbReference>
<dbReference type="GO" id="GO:0008270">
    <property type="term" value="F:zinc ion binding"/>
    <property type="evidence" value="ECO:0007669"/>
    <property type="project" value="UniProtKB-UniRule"/>
</dbReference>
<dbReference type="GO" id="GO:0006508">
    <property type="term" value="P:proteolysis"/>
    <property type="evidence" value="ECO:0007669"/>
    <property type="project" value="UniProtKB-KW"/>
</dbReference>
<dbReference type="CDD" id="cd07336">
    <property type="entry name" value="M48B_HtpX_like"/>
    <property type="match status" value="1"/>
</dbReference>
<dbReference type="Gene3D" id="3.30.2010.10">
    <property type="entry name" value="Metalloproteases ('zincins'), catalytic domain"/>
    <property type="match status" value="1"/>
</dbReference>
<dbReference type="HAMAP" id="MF_00188">
    <property type="entry name" value="Pept_M48_protease_HtpX"/>
    <property type="match status" value="1"/>
</dbReference>
<dbReference type="InterPro" id="IPR050083">
    <property type="entry name" value="HtpX_protease"/>
</dbReference>
<dbReference type="InterPro" id="IPR022919">
    <property type="entry name" value="Pept_M48_protease_HtpX"/>
</dbReference>
<dbReference type="InterPro" id="IPR001915">
    <property type="entry name" value="Peptidase_M48"/>
</dbReference>
<dbReference type="PANTHER" id="PTHR43221">
    <property type="entry name" value="PROTEASE HTPX"/>
    <property type="match status" value="1"/>
</dbReference>
<dbReference type="PANTHER" id="PTHR43221:SF2">
    <property type="entry name" value="PROTEASE HTPX HOMOLOG"/>
    <property type="match status" value="1"/>
</dbReference>
<dbReference type="Pfam" id="PF01435">
    <property type="entry name" value="Peptidase_M48"/>
    <property type="match status" value="1"/>
</dbReference>
<dbReference type="PROSITE" id="PS00142">
    <property type="entry name" value="ZINC_PROTEASE"/>
    <property type="match status" value="1"/>
</dbReference>
<organism>
    <name type="scientific">Nostoc sp. (strain PCC 7120 / SAG 25.82 / UTEX 2576)</name>
    <dbReference type="NCBI Taxonomy" id="103690"/>
    <lineage>
        <taxon>Bacteria</taxon>
        <taxon>Bacillati</taxon>
        <taxon>Cyanobacteriota</taxon>
        <taxon>Cyanophyceae</taxon>
        <taxon>Nostocales</taxon>
        <taxon>Nostocaceae</taxon>
        <taxon>Nostoc</taxon>
    </lineage>
</organism>
<feature type="chain" id="PRO_0000138849" description="Protease HtpX homolog">
    <location>
        <begin position="1"/>
        <end position="289"/>
    </location>
</feature>
<feature type="transmembrane region" description="Helical" evidence="1">
    <location>
        <begin position="8"/>
        <end position="28"/>
    </location>
</feature>
<feature type="transmembrane region" description="Helical" evidence="1">
    <location>
        <begin position="29"/>
        <end position="49"/>
    </location>
</feature>
<feature type="transmembrane region" description="Helical" evidence="1">
    <location>
        <begin position="151"/>
        <end position="171"/>
    </location>
</feature>
<feature type="transmembrane region" description="Helical" evidence="1">
    <location>
        <begin position="183"/>
        <end position="203"/>
    </location>
</feature>
<feature type="active site" evidence="1">
    <location>
        <position position="133"/>
    </location>
</feature>
<feature type="binding site" evidence="1">
    <location>
        <position position="132"/>
    </location>
    <ligand>
        <name>Zn(2+)</name>
        <dbReference type="ChEBI" id="CHEBI:29105"/>
        <note>catalytic</note>
    </ligand>
</feature>
<feature type="binding site" evidence="1">
    <location>
        <position position="136"/>
    </location>
    <ligand>
        <name>Zn(2+)</name>
        <dbReference type="ChEBI" id="CHEBI:29105"/>
        <note>catalytic</note>
    </ligand>
</feature>
<feature type="binding site" evidence="1">
    <location>
        <position position="208"/>
    </location>
    <ligand>
        <name>Zn(2+)</name>
        <dbReference type="ChEBI" id="CHEBI:29105"/>
        <note>catalytic</note>
    </ligand>
</feature>
<sequence>MGNQFKTLALLAALSGLLIAISYWVIGGSSGLMIGIGLAAVTNLLSWYQSDKIALAVYRAQAVSESQAPKLYRTVQRLSQRANIPMPGVYIVPGQTANAFATGRDPEHAAVAVTEGILNILPEDELEAVIAHELTHIINRDTLTQAVAATVAGAISFLAQMVSYSLWFGGIGGRDNERGGNPLGVLLTVVLAPIAATIIQLAISRTREFSADAGSARLTGNPRALARALQRLEATARQMPLNANPAFEPLLIINPISGQFLGNLFSSHPSTEARVQALLKLEKQLPTIA</sequence>
<name>HTPX_NOSS1</name>
<protein>
    <recommendedName>
        <fullName evidence="1">Protease HtpX homolog</fullName>
        <ecNumber evidence="1">3.4.24.-</ecNumber>
    </recommendedName>
</protein>
<evidence type="ECO:0000255" key="1">
    <source>
        <dbReference type="HAMAP-Rule" id="MF_00188"/>
    </source>
</evidence>
<gene>
    <name evidence="1" type="primary">htpX</name>
    <name type="ordered locus">all2263</name>
</gene>
<keyword id="KW-0997">Cell inner membrane</keyword>
<keyword id="KW-1003">Cell membrane</keyword>
<keyword id="KW-0378">Hydrolase</keyword>
<keyword id="KW-0472">Membrane</keyword>
<keyword id="KW-0479">Metal-binding</keyword>
<keyword id="KW-0482">Metalloprotease</keyword>
<keyword id="KW-0645">Protease</keyword>
<keyword id="KW-1185">Reference proteome</keyword>
<keyword id="KW-0812">Transmembrane</keyword>
<keyword id="KW-1133">Transmembrane helix</keyword>
<keyword id="KW-0862">Zinc</keyword>
<comment type="cofactor">
    <cofactor evidence="1">
        <name>Zn(2+)</name>
        <dbReference type="ChEBI" id="CHEBI:29105"/>
    </cofactor>
    <text evidence="1">Binds 1 zinc ion per subunit.</text>
</comment>
<comment type="subcellular location">
    <subcellularLocation>
        <location evidence="1">Cell inner membrane</location>
        <topology evidence="1">Multi-pass membrane protein</topology>
    </subcellularLocation>
</comment>
<comment type="similarity">
    <text evidence="1">Belongs to the peptidase M48B family.</text>
</comment>